<evidence type="ECO:0000255" key="1">
    <source>
        <dbReference type="HAMAP-Rule" id="MF_00073"/>
    </source>
</evidence>
<proteinExistence type="inferred from homology"/>
<accession>B1LAQ8</accession>
<protein>
    <recommendedName>
        <fullName evidence="1">Transcription antitermination protein NusB</fullName>
    </recommendedName>
    <alternativeName>
        <fullName evidence="1">Antitermination factor NusB</fullName>
    </alternativeName>
</protein>
<reference key="1">
    <citation type="journal article" date="2011" name="J. Bacteriol.">
        <title>Genome sequence of Thermotoga sp. strain RQ2, a hyperthermophilic bacterium isolated from a geothermally heated region of the seafloor near Ribeira Quente, the Azores.</title>
        <authorList>
            <person name="Swithers K.S."/>
            <person name="DiPippo J.L."/>
            <person name="Bruce D.C."/>
            <person name="Detter C."/>
            <person name="Tapia R."/>
            <person name="Han S."/>
            <person name="Saunders E."/>
            <person name="Goodwin L.A."/>
            <person name="Han J."/>
            <person name="Woyke T."/>
            <person name="Pitluck S."/>
            <person name="Pennacchio L."/>
            <person name="Nolan M."/>
            <person name="Mikhailova N."/>
            <person name="Lykidis A."/>
            <person name="Land M.L."/>
            <person name="Brettin T."/>
            <person name="Stetter K.O."/>
            <person name="Nelson K.E."/>
            <person name="Gogarten J.P."/>
            <person name="Noll K.M."/>
        </authorList>
    </citation>
    <scope>NUCLEOTIDE SEQUENCE [LARGE SCALE GENOMIC DNA]</scope>
    <source>
        <strain>RQ2</strain>
    </source>
</reference>
<sequence length="142" mass="16955">MKTPRRRMRLAVFKALFQHEFRRDEDLEQILEEILDETYDKKAKEDARRYIRGIKENLPMIDNLISRYLEKWSLNRLSAVDRNVLRLATYELLFEKDIPIEVTIDEAIEIAKRYGTENSGKFVNGILDRIAKEHAPKEKFEL</sequence>
<dbReference type="EMBL" id="CP000969">
    <property type="protein sequence ID" value="ACB09406.1"/>
    <property type="molecule type" value="Genomic_DNA"/>
</dbReference>
<dbReference type="RefSeq" id="WP_012310916.1">
    <property type="nucleotide sequence ID" value="NC_010483.1"/>
</dbReference>
<dbReference type="SMR" id="B1LAQ8"/>
<dbReference type="KEGG" id="trq:TRQ2_1059"/>
<dbReference type="HOGENOM" id="CLU_087843_3_0_0"/>
<dbReference type="Proteomes" id="UP000001687">
    <property type="component" value="Chromosome"/>
</dbReference>
<dbReference type="GO" id="GO:0005829">
    <property type="term" value="C:cytosol"/>
    <property type="evidence" value="ECO:0007669"/>
    <property type="project" value="TreeGrafter"/>
</dbReference>
<dbReference type="GO" id="GO:0003723">
    <property type="term" value="F:RNA binding"/>
    <property type="evidence" value="ECO:0007669"/>
    <property type="project" value="UniProtKB-UniRule"/>
</dbReference>
<dbReference type="GO" id="GO:0006353">
    <property type="term" value="P:DNA-templated transcription termination"/>
    <property type="evidence" value="ECO:0007669"/>
    <property type="project" value="UniProtKB-UniRule"/>
</dbReference>
<dbReference type="GO" id="GO:0031564">
    <property type="term" value="P:transcription antitermination"/>
    <property type="evidence" value="ECO:0007669"/>
    <property type="project" value="UniProtKB-KW"/>
</dbReference>
<dbReference type="CDD" id="cd00619">
    <property type="entry name" value="Terminator_NusB"/>
    <property type="match status" value="1"/>
</dbReference>
<dbReference type="FunFam" id="1.10.940.10:FF:000018">
    <property type="entry name" value="Transcription antitermination protein NusB"/>
    <property type="match status" value="1"/>
</dbReference>
<dbReference type="Gene3D" id="1.10.940.10">
    <property type="entry name" value="NusB-like"/>
    <property type="match status" value="1"/>
</dbReference>
<dbReference type="HAMAP" id="MF_00073">
    <property type="entry name" value="NusB"/>
    <property type="match status" value="1"/>
</dbReference>
<dbReference type="InterPro" id="IPR035926">
    <property type="entry name" value="NusB-like_sf"/>
</dbReference>
<dbReference type="InterPro" id="IPR011605">
    <property type="entry name" value="NusB_fam"/>
</dbReference>
<dbReference type="InterPro" id="IPR006027">
    <property type="entry name" value="NusB_RsmB_TIM44"/>
</dbReference>
<dbReference type="NCBIfam" id="TIGR01951">
    <property type="entry name" value="nusB"/>
    <property type="match status" value="1"/>
</dbReference>
<dbReference type="PANTHER" id="PTHR11078:SF3">
    <property type="entry name" value="ANTITERMINATION NUSB DOMAIN-CONTAINING PROTEIN"/>
    <property type="match status" value="1"/>
</dbReference>
<dbReference type="PANTHER" id="PTHR11078">
    <property type="entry name" value="N UTILIZATION SUBSTANCE PROTEIN B-RELATED"/>
    <property type="match status" value="1"/>
</dbReference>
<dbReference type="Pfam" id="PF01029">
    <property type="entry name" value="NusB"/>
    <property type="match status" value="1"/>
</dbReference>
<dbReference type="SUPFAM" id="SSF48013">
    <property type="entry name" value="NusB-like"/>
    <property type="match status" value="1"/>
</dbReference>
<gene>
    <name evidence="1" type="primary">nusB</name>
    <name type="ordered locus">TRQ2_1059</name>
</gene>
<comment type="function">
    <text evidence="1">Involved in transcription antitermination. Required for transcription of ribosomal RNA (rRNA) genes. Binds specifically to the boxA antiterminator sequence of the ribosomal RNA (rrn) operons.</text>
</comment>
<comment type="similarity">
    <text evidence="1">Belongs to the NusB family.</text>
</comment>
<feature type="chain" id="PRO_1000092597" description="Transcription antitermination protein NusB">
    <location>
        <begin position="1"/>
        <end position="142"/>
    </location>
</feature>
<keyword id="KW-0694">RNA-binding</keyword>
<keyword id="KW-0804">Transcription</keyword>
<keyword id="KW-0889">Transcription antitermination</keyword>
<keyword id="KW-0805">Transcription regulation</keyword>
<organism>
    <name type="scientific">Thermotoga sp. (strain RQ2)</name>
    <dbReference type="NCBI Taxonomy" id="126740"/>
    <lineage>
        <taxon>Bacteria</taxon>
        <taxon>Thermotogati</taxon>
        <taxon>Thermotogota</taxon>
        <taxon>Thermotogae</taxon>
        <taxon>Thermotogales</taxon>
        <taxon>Thermotogaceae</taxon>
        <taxon>Thermotoga</taxon>
    </lineage>
</organism>
<name>NUSB_THESQ</name>